<name>RL30E_ARCFU</name>
<proteinExistence type="inferred from homology"/>
<accession>O28389</accession>
<keyword id="KW-1185">Reference proteome</keyword>
<keyword id="KW-0687">Ribonucleoprotein</keyword>
<keyword id="KW-0689">Ribosomal protein</keyword>
<sequence length="86" mass="9266">MTEVETIIKTVLKTGGYRLGSKSTLKSLRNGEAKAVIVASNCPEEVLEKIKSYDVKILVYNGTNMELGALCGKPFSVAAMAITEEI</sequence>
<reference key="1">
    <citation type="journal article" date="1997" name="Nature">
        <title>The complete genome sequence of the hyperthermophilic, sulphate-reducing archaeon Archaeoglobus fulgidus.</title>
        <authorList>
            <person name="Klenk H.-P."/>
            <person name="Clayton R.A."/>
            <person name="Tomb J.-F."/>
            <person name="White O."/>
            <person name="Nelson K.E."/>
            <person name="Ketchum K.A."/>
            <person name="Dodson R.J."/>
            <person name="Gwinn M.L."/>
            <person name="Hickey E.K."/>
            <person name="Peterson J.D."/>
            <person name="Richardson D.L."/>
            <person name="Kerlavage A.R."/>
            <person name="Graham D.E."/>
            <person name="Kyrpides N.C."/>
            <person name="Fleischmann R.D."/>
            <person name="Quackenbush J."/>
            <person name="Lee N.H."/>
            <person name="Sutton G.G."/>
            <person name="Gill S.R."/>
            <person name="Kirkness E.F."/>
            <person name="Dougherty B.A."/>
            <person name="McKenney K."/>
            <person name="Adams M.D."/>
            <person name="Loftus B.J."/>
            <person name="Peterson S.N."/>
            <person name="Reich C.I."/>
            <person name="McNeil L.K."/>
            <person name="Badger J.H."/>
            <person name="Glodek A."/>
            <person name="Zhou L."/>
            <person name="Overbeek R."/>
            <person name="Gocayne J.D."/>
            <person name="Weidman J.F."/>
            <person name="McDonald L.A."/>
            <person name="Utterback T.R."/>
            <person name="Cotton M.D."/>
            <person name="Spriggs T."/>
            <person name="Artiach P."/>
            <person name="Kaine B.P."/>
            <person name="Sykes S.M."/>
            <person name="Sadow P.W."/>
            <person name="D'Andrea K.P."/>
            <person name="Bowman C."/>
            <person name="Fujii C."/>
            <person name="Garland S.A."/>
            <person name="Mason T.M."/>
            <person name="Olsen G.J."/>
            <person name="Fraser C.M."/>
            <person name="Smith H.O."/>
            <person name="Woese C.R."/>
            <person name="Venter J.C."/>
        </authorList>
    </citation>
    <scope>NUCLEOTIDE SEQUENCE [LARGE SCALE GENOMIC DNA]</scope>
    <source>
        <strain>ATCC 49558 / DSM 4304 / JCM 9628 / NBRC 100126 / VC-16</strain>
    </source>
</reference>
<organism>
    <name type="scientific">Archaeoglobus fulgidus (strain ATCC 49558 / DSM 4304 / JCM 9628 / NBRC 100126 / VC-16)</name>
    <dbReference type="NCBI Taxonomy" id="224325"/>
    <lineage>
        <taxon>Archaea</taxon>
        <taxon>Methanobacteriati</taxon>
        <taxon>Methanobacteriota</taxon>
        <taxon>Archaeoglobi</taxon>
        <taxon>Archaeoglobales</taxon>
        <taxon>Archaeoglobaceae</taxon>
        <taxon>Archaeoglobus</taxon>
    </lineage>
</organism>
<dbReference type="EMBL" id="AE000782">
    <property type="protein sequence ID" value="AAB89372.1"/>
    <property type="molecule type" value="Genomic_DNA"/>
</dbReference>
<dbReference type="PIR" id="A69486">
    <property type="entry name" value="A69486"/>
</dbReference>
<dbReference type="RefSeq" id="WP_010879383.1">
    <property type="nucleotide sequence ID" value="NC_000917.1"/>
</dbReference>
<dbReference type="SMR" id="O28389"/>
<dbReference type="STRING" id="224325.AF_1890"/>
<dbReference type="PaxDb" id="224325-AF_1890"/>
<dbReference type="EnsemblBacteria" id="AAB89372">
    <property type="protein sequence ID" value="AAB89372"/>
    <property type="gene ID" value="AF_1890"/>
</dbReference>
<dbReference type="KEGG" id="afu:AF_1890"/>
<dbReference type="eggNOG" id="arCOG01752">
    <property type="taxonomic scope" value="Archaea"/>
</dbReference>
<dbReference type="HOGENOM" id="CLU_130502_1_0_2"/>
<dbReference type="OrthoDB" id="10759at2157"/>
<dbReference type="PhylomeDB" id="O28389"/>
<dbReference type="Proteomes" id="UP000002199">
    <property type="component" value="Chromosome"/>
</dbReference>
<dbReference type="GO" id="GO:0022625">
    <property type="term" value="C:cytosolic large ribosomal subunit"/>
    <property type="evidence" value="ECO:0007669"/>
    <property type="project" value="InterPro"/>
</dbReference>
<dbReference type="GO" id="GO:0003723">
    <property type="term" value="F:RNA binding"/>
    <property type="evidence" value="ECO:0007669"/>
    <property type="project" value="InterPro"/>
</dbReference>
<dbReference type="GO" id="GO:0003735">
    <property type="term" value="F:structural constituent of ribosome"/>
    <property type="evidence" value="ECO:0007669"/>
    <property type="project" value="InterPro"/>
</dbReference>
<dbReference type="GO" id="GO:0006412">
    <property type="term" value="P:translation"/>
    <property type="evidence" value="ECO:0007669"/>
    <property type="project" value="UniProtKB-UniRule"/>
</dbReference>
<dbReference type="Gene3D" id="3.30.1330.30">
    <property type="match status" value="1"/>
</dbReference>
<dbReference type="HAMAP" id="MF_00481">
    <property type="entry name" value="Ribosomal_eL30"/>
    <property type="match status" value="1"/>
</dbReference>
<dbReference type="InterPro" id="IPR000231">
    <property type="entry name" value="Ribosomal_eL30"/>
</dbReference>
<dbReference type="InterPro" id="IPR039109">
    <property type="entry name" value="Ribosomal_eL30-like"/>
</dbReference>
<dbReference type="InterPro" id="IPR029064">
    <property type="entry name" value="Ribosomal_eL30-like_sf"/>
</dbReference>
<dbReference type="InterPro" id="IPR022991">
    <property type="entry name" value="Ribosomal_eL30_CS"/>
</dbReference>
<dbReference type="InterPro" id="IPR004038">
    <property type="entry name" value="Ribosomal_eL8/eL30/eS12/Gad45"/>
</dbReference>
<dbReference type="NCBIfam" id="NF002172">
    <property type="entry name" value="PRK01018.1"/>
    <property type="match status" value="1"/>
</dbReference>
<dbReference type="PANTHER" id="PTHR11449">
    <property type="entry name" value="RIBOSOMAL PROTEIN L30"/>
    <property type="match status" value="1"/>
</dbReference>
<dbReference type="Pfam" id="PF01248">
    <property type="entry name" value="Ribosomal_L7Ae"/>
    <property type="match status" value="1"/>
</dbReference>
<dbReference type="SUPFAM" id="SSF55315">
    <property type="entry name" value="L30e-like"/>
    <property type="match status" value="1"/>
</dbReference>
<dbReference type="PROSITE" id="PS00709">
    <property type="entry name" value="RIBOSOMAL_L30E_1"/>
    <property type="match status" value="1"/>
</dbReference>
<dbReference type="PROSITE" id="PS00993">
    <property type="entry name" value="RIBOSOMAL_L30E_2"/>
    <property type="match status" value="1"/>
</dbReference>
<comment type="similarity">
    <text evidence="1">Belongs to the eukaryotic ribosomal protein eL30 family.</text>
</comment>
<gene>
    <name type="primary">rpl30e</name>
    <name type="ordered locus">AF_1890</name>
</gene>
<protein>
    <recommendedName>
        <fullName evidence="1">Large ribosomal subunit protein eL30</fullName>
    </recommendedName>
    <alternativeName>
        <fullName>50S ribosomal protein L30e</fullName>
    </alternativeName>
</protein>
<evidence type="ECO:0000305" key="1"/>
<feature type="chain" id="PRO_0000146145" description="Large ribosomal subunit protein eL30">
    <location>
        <begin position="1"/>
        <end position="86"/>
    </location>
</feature>